<organism>
    <name type="scientific">Mus musculus</name>
    <name type="common">Mouse</name>
    <dbReference type="NCBI Taxonomy" id="10090"/>
    <lineage>
        <taxon>Eukaryota</taxon>
        <taxon>Metazoa</taxon>
        <taxon>Chordata</taxon>
        <taxon>Craniata</taxon>
        <taxon>Vertebrata</taxon>
        <taxon>Euteleostomi</taxon>
        <taxon>Mammalia</taxon>
        <taxon>Eutheria</taxon>
        <taxon>Euarchontoglires</taxon>
        <taxon>Glires</taxon>
        <taxon>Rodentia</taxon>
        <taxon>Myomorpha</taxon>
        <taxon>Muroidea</taxon>
        <taxon>Muridae</taxon>
        <taxon>Murinae</taxon>
        <taxon>Mus</taxon>
        <taxon>Mus</taxon>
    </lineage>
</organism>
<accession>P42580</accession>
<accession>A4QPC3</accession>
<accession>Q9JHF2</accession>
<accession>Q9JKW5</accession>
<accession>Q9JKW6</accession>
<accession>Q9JKW9</accession>
<accession>Q9JKX0</accession>
<accession>Q9JKX1</accession>
<sequence>MLAWQDVGAKAAPSHHKISFSVLDILDPQKFTRAALPPVRLAALEAKKSLEEVEAGQDACSGNPIGSQETPDAVGRGIDPGSPVEGSEAEEEEEAEDAGRAHQPERWQGVHEGSPEARAVAVGTEESGAEGLPASPGSPGSPRPRRRRAESSCAKPRRARTAFTYEQLVALENKFRATRYLSVCERLNLALSLSLTETQVKIWFQNRRTKWKKQNPGADGAVQAGGGAPQPGTPGAVAGGGGSATGSSPGPPVPGALPYQTFPTYPATNVLFPAASFPLTTAANGSPFTPFLGPSYLTPFYAPHL</sequence>
<gene>
    <name type="primary">Nkx1-2</name>
    <name type="synonym">Nkx1.1</name>
    <name evidence="7" type="synonym">Sax1</name>
</gene>
<name>NKX12_MOUSE</name>
<reference key="1">
    <citation type="journal article" date="1995" name="Mech. Dev.">
        <title>Expression of the novel murine homeobox gene Sax-1 in the developing nervous system.</title>
        <authorList>
            <person name="Schubert F.R."/>
            <person name="Fainsod A."/>
            <person name="Gruenbaum Y."/>
            <person name="Gruss P."/>
        </authorList>
    </citation>
    <scope>NUCLEOTIDE SEQUENCE [MRNA]</scope>
    <scope>DEVELOPMENTAL STAGE</scope>
    <source>
        <strain>C57BL/6J</strain>
    </source>
</reference>
<reference key="2">
    <citation type="journal article" date="2000" name="Proc. Natl. Acad. Sci. U.S.A.">
        <title>The mouse Nkx-1.2 homeobox gene: alternative RNA splicing at canonical and noncanonical splice sites.</title>
        <authorList>
            <person name="Rovescalli A.C."/>
            <person name="Cinquanta M."/>
            <person name="Ferrante J."/>
            <person name="Kozak C.A."/>
            <person name="Nirenberg M."/>
        </authorList>
    </citation>
    <scope>NUCLEOTIDE SEQUENCE [GENOMIC DNA / MRNA]</scope>
    <scope>TISSUE SPECIFICITY</scope>
    <scope>DEVELOPMENTAL STAGE</scope>
</reference>
<reference key="3">
    <citation type="journal article" date="2004" name="Genome Res.">
        <title>The status, quality, and expansion of the NIH full-length cDNA project: the Mammalian Gene Collection (MGC).</title>
        <authorList>
            <consortium name="The MGC Project Team"/>
        </authorList>
    </citation>
    <scope>NUCLEOTIDE SEQUENCE [LARGE SCALE MRNA]</scope>
</reference>
<reference key="4">
    <citation type="journal article" date="1997" name="Gene">
        <title>Identification of the transcription termination site of the mouse nkx-1.2 gene: involvement of sequence-specific factors.</title>
        <authorList>
            <person name="Hong S.B."/>
            <person name="Kim S.J."/>
            <person name="Noh M.J."/>
            <person name="Lee Y.M."/>
            <person name="Kim Y."/>
            <person name="Yoo O.J."/>
        </authorList>
    </citation>
    <scope>NUCLEOTIDE SEQUENCE [GENOMIC DNA] OF 289-305</scope>
    <source>
        <strain>BALB/cJ</strain>
    </source>
</reference>
<reference key="5">
    <citation type="journal article" date="1998" name="J. Biol. Chem.">
        <title>Homeodomain-interacting protein kinases, a novel family of co-repressors for homeodomain transcription factors.</title>
        <authorList>
            <person name="Kim Y.H."/>
            <person name="Choi C.Y."/>
            <person name="Lee S.-J."/>
            <person name="Conti M.A."/>
            <person name="Kim Y."/>
        </authorList>
    </citation>
    <scope>INTERACTION WITH HIPK1; HIPK2 AND HIPK3</scope>
    <scope>PHOSPHORYLATION</scope>
    <source>
        <strain>BALB/cJ</strain>
    </source>
</reference>
<reference key="6">
    <citation type="journal article" date="2019" name="J. Biol. Chem.">
        <title>The transcription factor NKX1-2 promotes adipogenesis and may contribute to a balance between adipocyte and osteoblast differentiation.</title>
        <authorList>
            <person name="Chen N."/>
            <person name="Schill R.L."/>
            <person name="O'Donnell M."/>
            <person name="Xu K."/>
            <person name="Bagchi D.P."/>
            <person name="MacDougald O.A."/>
            <person name="Koenig R.J."/>
            <person name="Xu B."/>
        </authorList>
    </citation>
    <scope>FUNCTION</scope>
    <scope>DEVELOPMENTAL STAGE</scope>
</reference>
<reference key="7">
    <citation type="journal article" date="2024" name="Stem Cell Reports">
        <title>The Wnt-dependent master regulator NKX1-2 controls mouse pre-implantation development.</title>
        <authorList>
            <person name="Nakagawa S."/>
            <person name="Carnevali D."/>
            <person name="Tan X."/>
            <person name="Alvarez M.J."/>
            <person name="Parfitt D.E."/>
            <person name="Di Vicino U."/>
            <person name="Arumugam K."/>
            <person name="Shin W."/>
            <person name="Aranda S."/>
            <person name="Normanno D."/>
            <person name="Sebastian-Perez R."/>
            <person name="Cannata C."/>
            <person name="Cortes P."/>
            <person name="Neguembor M.V."/>
            <person name="Shen M.M."/>
            <person name="Califano A."/>
            <person name="Cosma M.P."/>
        </authorList>
    </citation>
    <scope>FUNCTION</scope>
    <scope>SUBCELLULAR LOCATION</scope>
</reference>
<feature type="chain" id="PRO_0000049290" description="NK1 transcription factor-related protein 2">
    <location>
        <begin position="1"/>
        <end position="305"/>
    </location>
</feature>
<feature type="DNA-binding region" description="Homeobox" evidence="1">
    <location>
        <begin position="156"/>
        <end position="215"/>
    </location>
</feature>
<feature type="region of interest" description="Disordered" evidence="2">
    <location>
        <begin position="51"/>
        <end position="158"/>
    </location>
</feature>
<feature type="region of interest" description="Disordered" evidence="2">
    <location>
        <begin position="210"/>
        <end position="257"/>
    </location>
</feature>
<feature type="compositionally biased region" description="Acidic residues" evidence="2">
    <location>
        <begin position="87"/>
        <end position="96"/>
    </location>
</feature>
<feature type="compositionally biased region" description="Basic and acidic residues" evidence="2">
    <location>
        <begin position="97"/>
        <end position="115"/>
    </location>
</feature>
<feature type="compositionally biased region" description="Low complexity" evidence="2">
    <location>
        <begin position="129"/>
        <end position="140"/>
    </location>
</feature>
<feature type="sequence conflict" description="In Ref. 2; AAF43673." evidence="8" ref="2">
    <original>P</original>
    <variation>S</variation>
    <location>
        <position position="216"/>
    </location>
</feature>
<dbReference type="EMBL" id="X75384">
    <property type="protein sequence ID" value="CAA53153.1"/>
    <property type="molecule type" value="mRNA"/>
</dbReference>
<dbReference type="EMBL" id="AF222443">
    <property type="protein sequence ID" value="AAF43669.1"/>
    <property type="molecule type" value="Genomic_DNA"/>
</dbReference>
<dbReference type="EMBL" id="AF222443">
    <property type="protein sequence ID" value="AAF43670.1"/>
    <property type="status" value="ALT_SEQ"/>
    <property type="molecule type" value="Genomic_DNA"/>
</dbReference>
<dbReference type="EMBL" id="AF222444">
    <property type="protein sequence ID" value="AAF43671.1"/>
    <property type="molecule type" value="mRNA"/>
</dbReference>
<dbReference type="EMBL" id="AF222445">
    <property type="protein sequence ID" value="AAF43672.1"/>
    <property type="status" value="ALT_SEQ"/>
    <property type="molecule type" value="mRNA"/>
</dbReference>
<dbReference type="EMBL" id="AF223361">
    <property type="protein sequence ID" value="AAF43673.1"/>
    <property type="molecule type" value="mRNA"/>
</dbReference>
<dbReference type="EMBL" id="AF223362">
    <property type="protein sequence ID" value="AAF43674.1"/>
    <property type="status" value="ALT_SEQ"/>
    <property type="molecule type" value="mRNA"/>
</dbReference>
<dbReference type="EMBL" id="BC139757">
    <property type="protein sequence ID" value="AAI39758.1"/>
    <property type="molecule type" value="mRNA"/>
</dbReference>
<dbReference type="EMBL" id="U58137">
    <property type="protein sequence ID" value="AAB06948.1"/>
    <property type="molecule type" value="Genomic_DNA"/>
</dbReference>
<dbReference type="CCDS" id="CCDS21924.1"/>
<dbReference type="PIR" id="S41860">
    <property type="entry name" value="S41860"/>
</dbReference>
<dbReference type="RefSeq" id="NP_033149.1">
    <property type="nucleotide sequence ID" value="NM_009123.2"/>
</dbReference>
<dbReference type="SMR" id="P42580"/>
<dbReference type="BioGRID" id="203078">
    <property type="interactions" value="1"/>
</dbReference>
<dbReference type="FunCoup" id="P42580">
    <property type="interactions" value="1041"/>
</dbReference>
<dbReference type="STRING" id="10090.ENSMUSP00000052778"/>
<dbReference type="GlyGen" id="P42580">
    <property type="glycosylation" value="1 site"/>
</dbReference>
<dbReference type="PaxDb" id="10090-ENSMUSP00000052778"/>
<dbReference type="Antibodypedia" id="60104">
    <property type="antibodies" value="72 antibodies from 16 providers"/>
</dbReference>
<dbReference type="DNASU" id="20231"/>
<dbReference type="Ensembl" id="ENSMUST00000054562.4">
    <property type="protein sequence ID" value="ENSMUSP00000052778.3"/>
    <property type="gene ID" value="ENSMUSG00000048528.8"/>
</dbReference>
<dbReference type="GeneID" id="20231"/>
<dbReference type="KEGG" id="mmu:20231"/>
<dbReference type="UCSC" id="uc009kcc.1">
    <property type="organism name" value="mouse"/>
</dbReference>
<dbReference type="AGR" id="MGI:104806"/>
<dbReference type="CTD" id="390010"/>
<dbReference type="MGI" id="MGI:104806">
    <property type="gene designation" value="Nkx1-2"/>
</dbReference>
<dbReference type="VEuPathDB" id="HostDB:ENSMUSG00000048528"/>
<dbReference type="eggNOG" id="KOG0488">
    <property type="taxonomic scope" value="Eukaryota"/>
</dbReference>
<dbReference type="GeneTree" id="ENSGT00940000162535"/>
<dbReference type="HOGENOM" id="CLU_063378_0_0_1"/>
<dbReference type="InParanoid" id="P42580"/>
<dbReference type="OMA" id="AYLGPFY"/>
<dbReference type="OrthoDB" id="6159439at2759"/>
<dbReference type="PhylomeDB" id="P42580"/>
<dbReference type="TreeFam" id="TF316128"/>
<dbReference type="BioGRID-ORCS" id="20231">
    <property type="hits" value="3 hits in 78 CRISPR screens"/>
</dbReference>
<dbReference type="ChiTaRS" id="Nkx1-2">
    <property type="organism name" value="mouse"/>
</dbReference>
<dbReference type="PRO" id="PR:P42580"/>
<dbReference type="Proteomes" id="UP000000589">
    <property type="component" value="Chromosome 7"/>
</dbReference>
<dbReference type="RNAct" id="P42580">
    <property type="molecule type" value="protein"/>
</dbReference>
<dbReference type="Bgee" id="ENSMUSG00000048528">
    <property type="expression patterns" value="Expressed in primitive streak and 48 other cell types or tissues"/>
</dbReference>
<dbReference type="GO" id="GO:0005634">
    <property type="term" value="C:nucleus"/>
    <property type="evidence" value="ECO:0007669"/>
    <property type="project" value="UniProtKB-SubCell"/>
</dbReference>
<dbReference type="GO" id="GO:0003677">
    <property type="term" value="F:DNA binding"/>
    <property type="evidence" value="ECO:0007669"/>
    <property type="project" value="UniProtKB-KW"/>
</dbReference>
<dbReference type="GO" id="GO:0000981">
    <property type="term" value="F:DNA-binding transcription factor activity, RNA polymerase II-specific"/>
    <property type="evidence" value="ECO:0007669"/>
    <property type="project" value="InterPro"/>
</dbReference>
<dbReference type="CDD" id="cd00086">
    <property type="entry name" value="homeodomain"/>
    <property type="match status" value="1"/>
</dbReference>
<dbReference type="FunFam" id="1.10.10.60:FF:000720">
    <property type="entry name" value="NK1 homeobox 2"/>
    <property type="match status" value="1"/>
</dbReference>
<dbReference type="Gene3D" id="1.10.10.60">
    <property type="entry name" value="Homeodomain-like"/>
    <property type="match status" value="1"/>
</dbReference>
<dbReference type="InterPro" id="IPR001356">
    <property type="entry name" value="HD"/>
</dbReference>
<dbReference type="InterPro" id="IPR020479">
    <property type="entry name" value="HD_metazoa"/>
</dbReference>
<dbReference type="InterPro" id="IPR017970">
    <property type="entry name" value="Homeobox_CS"/>
</dbReference>
<dbReference type="InterPro" id="IPR050394">
    <property type="entry name" value="Homeobox_NK-like"/>
</dbReference>
<dbReference type="InterPro" id="IPR009057">
    <property type="entry name" value="Homeodomain-like_sf"/>
</dbReference>
<dbReference type="PANTHER" id="PTHR24340">
    <property type="entry name" value="HOMEOBOX PROTEIN NKX"/>
    <property type="match status" value="1"/>
</dbReference>
<dbReference type="PANTHER" id="PTHR24340:SF17">
    <property type="entry name" value="NK1 TRANSCRIPTION FACTOR-RELATED PROTEIN 2"/>
    <property type="match status" value="1"/>
</dbReference>
<dbReference type="Pfam" id="PF00046">
    <property type="entry name" value="Homeodomain"/>
    <property type="match status" value="1"/>
</dbReference>
<dbReference type="PRINTS" id="PR00024">
    <property type="entry name" value="HOMEOBOX"/>
</dbReference>
<dbReference type="SMART" id="SM00389">
    <property type="entry name" value="HOX"/>
    <property type="match status" value="1"/>
</dbReference>
<dbReference type="SUPFAM" id="SSF46689">
    <property type="entry name" value="Homeodomain-like"/>
    <property type="match status" value="1"/>
</dbReference>
<dbReference type="PROSITE" id="PS00027">
    <property type="entry name" value="HOMEOBOX_1"/>
    <property type="match status" value="1"/>
</dbReference>
<dbReference type="PROSITE" id="PS50071">
    <property type="entry name" value="HOMEOBOX_2"/>
    <property type="match status" value="1"/>
</dbReference>
<proteinExistence type="evidence at protein level"/>
<evidence type="ECO:0000255" key="1">
    <source>
        <dbReference type="PROSITE-ProRule" id="PRU00108"/>
    </source>
</evidence>
<evidence type="ECO:0000256" key="2">
    <source>
        <dbReference type="SAM" id="MobiDB-lite"/>
    </source>
</evidence>
<evidence type="ECO:0000269" key="3">
    <source>
    </source>
</evidence>
<evidence type="ECO:0000269" key="4">
    <source>
    </source>
</evidence>
<evidence type="ECO:0000269" key="5">
    <source>
    </source>
</evidence>
<evidence type="ECO:0000269" key="6">
    <source>
    </source>
</evidence>
<evidence type="ECO:0000303" key="7">
    <source>
    </source>
</evidence>
<evidence type="ECO:0000305" key="8"/>
<evidence type="ECO:0000305" key="9">
    <source>
    </source>
</evidence>
<comment type="function">
    <text evidence="4 5 9">Transcriptional repressor (Probable). May play a role in early development as a Wnt/beta-catenin effector, hence controlling pluripotency and preimplantation development of embryonic stem cells (PubMed:38701778). May promote adipogenesis in mesenchymal stem cells, possibly by inhibiting the expression of the antiadipogenic factor NR2F2 (PubMed:31615896). May inhibit osteoblastogenic differentiation (PubMed:31615896).</text>
</comment>
<comment type="subunit">
    <text evidence="6">Interacts (via the homeodomain) with HIPK1, HIPK2, and HIPK3.</text>
</comment>
<comment type="subcellular location">
    <subcellularLocation>
        <location evidence="5">Nucleus</location>
    </subcellularLocation>
    <subcellularLocation>
        <location evidence="5">Nucleus</location>
        <location evidence="5">Nucleolus</location>
    </subcellularLocation>
    <text evidence="5">In the very first hours following fertilization, at 0.5 dpc, found exclusively in the maternal pronucleus. Specifically localizes to the nucleoli of oocytes and preimplantation embryos.</text>
</comment>
<comment type="tissue specificity">
    <text evidence="3">Expression detected in the brain, testis and spleen. In the testis, expressed in the germ cells of the seminiferous epithelium, predominantly in elongating spermatids and spermatozoa. Expressed throughout the brain with highest levels in regions of the cerebral cortex, hippocampus, diencephalon, pons, medulla and cerebellum.</text>
</comment>
<comment type="developmental stage">
    <text evidence="3 4">First detected at 7.0 dpc in the mid-streak egg cylinder. At 7.5 dpc, expression increases and remains confined to the ectodermal layer along the primitive streak and posterior to the node and extends anterior to the node into the neural plate. At this stage, it is restricted to columnar ectodermal cells. At 8.0 dpc, expressed at high levels in the open neural groove and at lower levels in the ventral midline of the neuroepithelium, adjacent to the notochord. At 9.0 dpc, expressed in the recently formed neuroectoderm through the closing neural tube. In all stages, expression looks restricted to the site of neuroectoderm formation at the posterior pole of the embryo. At 9.5 dpc, expression starts in a few cells in the hindbrain. During the following hours, expression increases and extends caudally into the spinal cord, reaching the level of the hindlimb buds at 10.0 dpc. Around the same stage, expressed in the dorsal tail bud mesenchyme and extends continuously into the neural tube, anteriorly fading out at the level of the recently formed somite. Thus appears to be transiently expressed in the developing trunk neuroepithelium in both primary and secondary neurulation. At day 10.0 pc, detected in the tegmentum, a distinct domain in the ventral portion of the anterior mesencephalon. At 10.5 dpc, expression starts in the pretectum at the caudal border of the diencephalon. At 11.5 dpc, still expressed in the tegmentum and, anteriorly, predominantly expressed in the pretectum (PubMed:31615896). At 14.5 dpc, detected in the spinal cord, mesencephalon (mostly in the medulla oblongata, pontine flexure and pons and at the level of the ponsymidbrain boundary) and diencephalon (mainly in the dorsal thalamus) (PubMed:10681422). Up-regulated in 3T3-L1 cells during differentiation into adipocytes (at protein level) (PubMed:31615896).</text>
</comment>
<comment type="PTM">
    <text evidence="6">Phosphorylated by HIPK2 in vitro.</text>
</comment>
<comment type="similarity">
    <text evidence="8">Belongs to the NK-1 homeobox family.</text>
</comment>
<comment type="sequence caution" evidence="8">
    <conflict type="erroneous gene model prediction">
        <sequence resource="EMBL-CDS" id="AAF43670"/>
    </conflict>
</comment>
<comment type="sequence caution" evidence="8">
    <conflict type="miscellaneous discrepancy">
        <sequence resource="EMBL-CDS" id="AAF43672"/>
    </conflict>
    <text>Probable cloning artifact.</text>
</comment>
<comment type="sequence caution" evidence="8">
    <conflict type="miscellaneous discrepancy">
        <sequence resource="EMBL-CDS" id="AAF43674"/>
    </conflict>
    <text>Aberrant splicing.</text>
</comment>
<protein>
    <recommendedName>
        <fullName>NK1 transcription factor-related protein 2</fullName>
    </recommendedName>
    <alternativeName>
        <fullName evidence="7">Homeobox protein SAX-1</fullName>
    </alternativeName>
    <alternativeName>
        <fullName>NKX-1.1</fullName>
    </alternativeName>
</protein>
<keyword id="KW-0217">Developmental protein</keyword>
<keyword id="KW-0238">DNA-binding</keyword>
<keyword id="KW-0371">Homeobox</keyword>
<keyword id="KW-0539">Nucleus</keyword>
<keyword id="KW-1185">Reference proteome</keyword>